<accession>Q8D2E2</accession>
<sequence>MKRLLFFLICVFFSKTSYSNVDISINKGIDISTPIGISSFEWVEVNENNNYENISKIISCDLQNSGKFSPIEIYKESNKSIEKQIKNNSINLNKLNINTILTGKISLNYNGEYLISYKLIDLVNYPGKILLSGYRTVHLQSFRKVAHEISNEIFKKLTGIQGVFHTRIAYILYNKNNEYKYKLCISDYDGYNQNIIHQSNMPLMSPSWSPDGKKIAYVTFEKGSSEIKIKDIKTGSIKHISSFPYHNGAPAFSPNGENLAFALSKTGSLNLYVMNLKNGYIKQITHGNSNNTEPSWFPDNNSLAYTSDQSGTPQIYKINISNGKFNRLSWLGSKNQNANVSPDGKFIAMVNSEKKSQHIALFDINMDNAKIITETFLDEAPSISPNNVMIIYTSSYGDSSVIELISTNGRFKTSILKINGQIKFPAWSQKI</sequence>
<protein>
    <recommendedName>
        <fullName evidence="1">Tol-Pal system protein TolB</fullName>
    </recommendedName>
</protein>
<dbReference type="EMBL" id="BA000021">
    <property type="protein sequence ID" value="BAC24558.1"/>
    <property type="molecule type" value="Genomic_DNA"/>
</dbReference>
<dbReference type="SMR" id="Q8D2E2"/>
<dbReference type="STRING" id="36870.gene:10368914"/>
<dbReference type="KEGG" id="wbr:tolB"/>
<dbReference type="eggNOG" id="COG0823">
    <property type="taxonomic scope" value="Bacteria"/>
</dbReference>
<dbReference type="HOGENOM" id="CLU_047123_0_0_6"/>
<dbReference type="OrthoDB" id="9802240at2"/>
<dbReference type="Proteomes" id="UP000000562">
    <property type="component" value="Chromosome"/>
</dbReference>
<dbReference type="GO" id="GO:0042597">
    <property type="term" value="C:periplasmic space"/>
    <property type="evidence" value="ECO:0007669"/>
    <property type="project" value="UniProtKB-SubCell"/>
</dbReference>
<dbReference type="GO" id="GO:0051301">
    <property type="term" value="P:cell division"/>
    <property type="evidence" value="ECO:0007669"/>
    <property type="project" value="UniProtKB-UniRule"/>
</dbReference>
<dbReference type="GO" id="GO:0017038">
    <property type="term" value="P:protein import"/>
    <property type="evidence" value="ECO:0007669"/>
    <property type="project" value="InterPro"/>
</dbReference>
<dbReference type="Gene3D" id="2.120.10.30">
    <property type="entry name" value="TolB, C-terminal domain"/>
    <property type="match status" value="1"/>
</dbReference>
<dbReference type="Gene3D" id="3.40.50.10070">
    <property type="entry name" value="TolB, N-terminal domain"/>
    <property type="match status" value="1"/>
</dbReference>
<dbReference type="HAMAP" id="MF_00671">
    <property type="entry name" value="TolB"/>
    <property type="match status" value="1"/>
</dbReference>
<dbReference type="InterPro" id="IPR011042">
    <property type="entry name" value="6-blade_b-propeller_TolB-like"/>
</dbReference>
<dbReference type="InterPro" id="IPR011659">
    <property type="entry name" value="PD40"/>
</dbReference>
<dbReference type="InterPro" id="IPR014167">
    <property type="entry name" value="Tol-Pal_TolB"/>
</dbReference>
<dbReference type="InterPro" id="IPR007195">
    <property type="entry name" value="TolB_N"/>
</dbReference>
<dbReference type="NCBIfam" id="TIGR02800">
    <property type="entry name" value="propeller_TolB"/>
    <property type="match status" value="1"/>
</dbReference>
<dbReference type="PANTHER" id="PTHR36842:SF1">
    <property type="entry name" value="PROTEIN TOLB"/>
    <property type="match status" value="1"/>
</dbReference>
<dbReference type="PANTHER" id="PTHR36842">
    <property type="entry name" value="PROTEIN TOLB HOMOLOG"/>
    <property type="match status" value="1"/>
</dbReference>
<dbReference type="Pfam" id="PF07676">
    <property type="entry name" value="PD40"/>
    <property type="match status" value="4"/>
</dbReference>
<dbReference type="Pfam" id="PF04052">
    <property type="entry name" value="TolB_N"/>
    <property type="match status" value="1"/>
</dbReference>
<dbReference type="SUPFAM" id="SSF52964">
    <property type="entry name" value="TolB, N-terminal domain"/>
    <property type="match status" value="1"/>
</dbReference>
<dbReference type="SUPFAM" id="SSF69304">
    <property type="entry name" value="Tricorn protease N-terminal domain"/>
    <property type="match status" value="1"/>
</dbReference>
<organism>
    <name type="scientific">Wigglesworthia glossinidia brevipalpis</name>
    <dbReference type="NCBI Taxonomy" id="36870"/>
    <lineage>
        <taxon>Bacteria</taxon>
        <taxon>Pseudomonadati</taxon>
        <taxon>Pseudomonadota</taxon>
        <taxon>Gammaproteobacteria</taxon>
        <taxon>Enterobacterales</taxon>
        <taxon>Erwiniaceae</taxon>
        <taxon>Wigglesworthia</taxon>
    </lineage>
</organism>
<feature type="signal peptide" evidence="1">
    <location>
        <begin position="1"/>
        <end position="19"/>
    </location>
</feature>
<feature type="chain" id="PRO_0000034694" description="Tol-Pal system protein TolB" evidence="1">
    <location>
        <begin position="20"/>
        <end position="431"/>
    </location>
</feature>
<gene>
    <name evidence="1" type="primary">tolB</name>
    <name type="ordered locus">WIGBR4120</name>
</gene>
<comment type="function">
    <text evidence="1">Part of the Tol-Pal system, which plays a role in outer membrane invagination during cell division and is important for maintaining outer membrane integrity. TolB occupies a key intermediary position in the Tol-Pal system because it communicates directly with both membrane-embedded components, Pal in the outer membrane and TolA in the inner membrane.</text>
</comment>
<comment type="subunit">
    <text evidence="1">The Tol-Pal system is composed of five core proteins: the inner membrane proteins TolA, TolQ and TolR, the periplasmic protein TolB and the outer membrane protein Pal. They form a network linking the inner and outer membranes and the peptidoglycan layer.</text>
</comment>
<comment type="subcellular location">
    <subcellularLocation>
        <location evidence="1">Periplasm</location>
    </subcellularLocation>
</comment>
<comment type="similarity">
    <text evidence="1">Belongs to the TolB family.</text>
</comment>
<proteinExistence type="inferred from homology"/>
<reference key="1">
    <citation type="journal article" date="2002" name="Nat. Genet.">
        <title>Genome sequence of the endocellular obligate symbiont of tsetse flies, Wigglesworthia glossinidia.</title>
        <authorList>
            <person name="Akman L."/>
            <person name="Yamashita A."/>
            <person name="Watanabe H."/>
            <person name="Oshima K."/>
            <person name="Shiba T."/>
            <person name="Hattori M."/>
            <person name="Aksoy S."/>
        </authorList>
    </citation>
    <scope>NUCLEOTIDE SEQUENCE [LARGE SCALE GENOMIC DNA]</scope>
</reference>
<name>TOLB_WIGBR</name>
<keyword id="KW-0131">Cell cycle</keyword>
<keyword id="KW-0132">Cell division</keyword>
<keyword id="KW-0574">Periplasm</keyword>
<keyword id="KW-1185">Reference proteome</keyword>
<keyword id="KW-0732">Signal</keyword>
<evidence type="ECO:0000255" key="1">
    <source>
        <dbReference type="HAMAP-Rule" id="MF_00671"/>
    </source>
</evidence>